<organism>
    <name type="scientific">Yersinia enterocolitica serotype O:8 / biotype 1B (strain NCTC 13174 / 8081)</name>
    <dbReference type="NCBI Taxonomy" id="393305"/>
    <lineage>
        <taxon>Bacteria</taxon>
        <taxon>Pseudomonadati</taxon>
        <taxon>Pseudomonadota</taxon>
        <taxon>Gammaproteobacteria</taxon>
        <taxon>Enterobacterales</taxon>
        <taxon>Yersiniaceae</taxon>
        <taxon>Yersinia</taxon>
    </lineage>
</organism>
<sequence>MPHLAELVAKAKAAVEDAQDVAALDLVRVEYLGKKGHLTLQMTSLRELPAEERPAAGAVINQAKQEVQEALNARKEKLESVVLNARLAAETIDVSLPGRRMENGGLHPVTRTIDRIETFFGELGFSVESGPEIEDDYHNFDALNIPAHHPARADHDTFWFDTTRLLRTQTSGVQIRTMKAQQPPIRIIVPGRVYRNDYDQTHTPMFHQMEGLIVDKDISFTNLKGTLHDFLRNFFEEDLQIRFRPSYFPFTEPSAEVDVMGKNGKWLEVLGCGMVHPNVLRNVGIDPEVYSGFAFGMGMERLTMLRYGVTDLRAFFENDLRFLKQFK</sequence>
<keyword id="KW-0030">Aminoacyl-tRNA synthetase</keyword>
<keyword id="KW-0067">ATP-binding</keyword>
<keyword id="KW-0963">Cytoplasm</keyword>
<keyword id="KW-0436">Ligase</keyword>
<keyword id="KW-0460">Magnesium</keyword>
<keyword id="KW-0479">Metal-binding</keyword>
<keyword id="KW-0547">Nucleotide-binding</keyword>
<keyword id="KW-0648">Protein biosynthesis</keyword>
<feature type="chain" id="PRO_1000006914" description="Phenylalanine--tRNA ligase alpha subunit">
    <location>
        <begin position="1"/>
        <end position="327"/>
    </location>
</feature>
<feature type="binding site" evidence="1">
    <location>
        <position position="252"/>
    </location>
    <ligand>
        <name>Mg(2+)</name>
        <dbReference type="ChEBI" id="CHEBI:18420"/>
        <note>shared with beta subunit</note>
    </ligand>
</feature>
<comment type="catalytic activity">
    <reaction evidence="1">
        <text>tRNA(Phe) + L-phenylalanine + ATP = L-phenylalanyl-tRNA(Phe) + AMP + diphosphate + H(+)</text>
        <dbReference type="Rhea" id="RHEA:19413"/>
        <dbReference type="Rhea" id="RHEA-COMP:9668"/>
        <dbReference type="Rhea" id="RHEA-COMP:9699"/>
        <dbReference type="ChEBI" id="CHEBI:15378"/>
        <dbReference type="ChEBI" id="CHEBI:30616"/>
        <dbReference type="ChEBI" id="CHEBI:33019"/>
        <dbReference type="ChEBI" id="CHEBI:58095"/>
        <dbReference type="ChEBI" id="CHEBI:78442"/>
        <dbReference type="ChEBI" id="CHEBI:78531"/>
        <dbReference type="ChEBI" id="CHEBI:456215"/>
        <dbReference type="EC" id="6.1.1.20"/>
    </reaction>
</comment>
<comment type="cofactor">
    <cofactor evidence="1">
        <name>Mg(2+)</name>
        <dbReference type="ChEBI" id="CHEBI:18420"/>
    </cofactor>
    <text evidence="1">Binds 2 magnesium ions per tetramer.</text>
</comment>
<comment type="subunit">
    <text evidence="1">Tetramer of two alpha and two beta subunits.</text>
</comment>
<comment type="subcellular location">
    <subcellularLocation>
        <location evidence="1">Cytoplasm</location>
    </subcellularLocation>
</comment>
<comment type="similarity">
    <text evidence="1">Belongs to the class-II aminoacyl-tRNA synthetase family. Phe-tRNA synthetase alpha subunit type 1 subfamily.</text>
</comment>
<name>SYFA_YERE8</name>
<dbReference type="EC" id="6.1.1.20" evidence="1"/>
<dbReference type="EMBL" id="AM286415">
    <property type="protein sequence ID" value="CAL11996.1"/>
    <property type="molecule type" value="Genomic_DNA"/>
</dbReference>
<dbReference type="RefSeq" id="WP_005161570.1">
    <property type="nucleotide sequence ID" value="NC_008800.1"/>
</dbReference>
<dbReference type="RefSeq" id="YP_001006174.1">
    <property type="nucleotide sequence ID" value="NC_008800.1"/>
</dbReference>
<dbReference type="SMR" id="A1JML2"/>
<dbReference type="GeneID" id="31408904"/>
<dbReference type="KEGG" id="yen:YE1916"/>
<dbReference type="PATRIC" id="fig|393305.7.peg.2070"/>
<dbReference type="eggNOG" id="COG0016">
    <property type="taxonomic scope" value="Bacteria"/>
</dbReference>
<dbReference type="HOGENOM" id="CLU_025086_0_1_6"/>
<dbReference type="OrthoDB" id="9800719at2"/>
<dbReference type="Proteomes" id="UP000000642">
    <property type="component" value="Chromosome"/>
</dbReference>
<dbReference type="GO" id="GO:0005737">
    <property type="term" value="C:cytoplasm"/>
    <property type="evidence" value="ECO:0007669"/>
    <property type="project" value="UniProtKB-SubCell"/>
</dbReference>
<dbReference type="GO" id="GO:0005524">
    <property type="term" value="F:ATP binding"/>
    <property type="evidence" value="ECO:0007669"/>
    <property type="project" value="UniProtKB-UniRule"/>
</dbReference>
<dbReference type="GO" id="GO:0000287">
    <property type="term" value="F:magnesium ion binding"/>
    <property type="evidence" value="ECO:0007669"/>
    <property type="project" value="UniProtKB-UniRule"/>
</dbReference>
<dbReference type="GO" id="GO:0004826">
    <property type="term" value="F:phenylalanine-tRNA ligase activity"/>
    <property type="evidence" value="ECO:0007669"/>
    <property type="project" value="UniProtKB-UniRule"/>
</dbReference>
<dbReference type="GO" id="GO:0000049">
    <property type="term" value="F:tRNA binding"/>
    <property type="evidence" value="ECO:0007669"/>
    <property type="project" value="InterPro"/>
</dbReference>
<dbReference type="GO" id="GO:0006432">
    <property type="term" value="P:phenylalanyl-tRNA aminoacylation"/>
    <property type="evidence" value="ECO:0007669"/>
    <property type="project" value="UniProtKB-UniRule"/>
</dbReference>
<dbReference type="CDD" id="cd00496">
    <property type="entry name" value="PheRS_alpha_core"/>
    <property type="match status" value="1"/>
</dbReference>
<dbReference type="FunFam" id="3.30.930.10:FF:000003">
    <property type="entry name" value="Phenylalanine--tRNA ligase alpha subunit"/>
    <property type="match status" value="1"/>
</dbReference>
<dbReference type="Gene3D" id="3.30.930.10">
    <property type="entry name" value="Bira Bifunctional Protein, Domain 2"/>
    <property type="match status" value="1"/>
</dbReference>
<dbReference type="HAMAP" id="MF_00281">
    <property type="entry name" value="Phe_tRNA_synth_alpha1"/>
    <property type="match status" value="1"/>
</dbReference>
<dbReference type="InterPro" id="IPR006195">
    <property type="entry name" value="aa-tRNA-synth_II"/>
</dbReference>
<dbReference type="InterPro" id="IPR045864">
    <property type="entry name" value="aa-tRNA-synth_II/BPL/LPL"/>
</dbReference>
<dbReference type="InterPro" id="IPR004529">
    <property type="entry name" value="Phe-tRNA-synth_IIc_asu"/>
</dbReference>
<dbReference type="InterPro" id="IPR004188">
    <property type="entry name" value="Phe-tRNA_ligase_II_N"/>
</dbReference>
<dbReference type="InterPro" id="IPR022911">
    <property type="entry name" value="Phe_tRNA_ligase_alpha1_bac"/>
</dbReference>
<dbReference type="InterPro" id="IPR002319">
    <property type="entry name" value="Phenylalanyl-tRNA_Synthase"/>
</dbReference>
<dbReference type="InterPro" id="IPR010978">
    <property type="entry name" value="tRNA-bd_arm"/>
</dbReference>
<dbReference type="NCBIfam" id="TIGR00468">
    <property type="entry name" value="pheS"/>
    <property type="match status" value="1"/>
</dbReference>
<dbReference type="PANTHER" id="PTHR11538:SF41">
    <property type="entry name" value="PHENYLALANINE--TRNA LIGASE, MITOCHONDRIAL"/>
    <property type="match status" value="1"/>
</dbReference>
<dbReference type="PANTHER" id="PTHR11538">
    <property type="entry name" value="PHENYLALANYL-TRNA SYNTHETASE"/>
    <property type="match status" value="1"/>
</dbReference>
<dbReference type="Pfam" id="PF02912">
    <property type="entry name" value="Phe_tRNA-synt_N"/>
    <property type="match status" value="1"/>
</dbReference>
<dbReference type="Pfam" id="PF01409">
    <property type="entry name" value="tRNA-synt_2d"/>
    <property type="match status" value="1"/>
</dbReference>
<dbReference type="SUPFAM" id="SSF55681">
    <property type="entry name" value="Class II aaRS and biotin synthetases"/>
    <property type="match status" value="1"/>
</dbReference>
<dbReference type="SUPFAM" id="SSF46589">
    <property type="entry name" value="tRNA-binding arm"/>
    <property type="match status" value="1"/>
</dbReference>
<dbReference type="PROSITE" id="PS50862">
    <property type="entry name" value="AA_TRNA_LIGASE_II"/>
    <property type="match status" value="1"/>
</dbReference>
<evidence type="ECO:0000255" key="1">
    <source>
        <dbReference type="HAMAP-Rule" id="MF_00281"/>
    </source>
</evidence>
<proteinExistence type="inferred from homology"/>
<gene>
    <name evidence="1" type="primary">pheS</name>
    <name type="ordered locus">YE1916</name>
</gene>
<reference key="1">
    <citation type="journal article" date="2006" name="PLoS Genet.">
        <title>The complete genome sequence and comparative genome analysis of the high pathogenicity Yersinia enterocolitica strain 8081.</title>
        <authorList>
            <person name="Thomson N.R."/>
            <person name="Howard S."/>
            <person name="Wren B.W."/>
            <person name="Holden M.T.G."/>
            <person name="Crossman L."/>
            <person name="Challis G.L."/>
            <person name="Churcher C."/>
            <person name="Mungall K."/>
            <person name="Brooks K."/>
            <person name="Chillingworth T."/>
            <person name="Feltwell T."/>
            <person name="Abdellah Z."/>
            <person name="Hauser H."/>
            <person name="Jagels K."/>
            <person name="Maddison M."/>
            <person name="Moule S."/>
            <person name="Sanders M."/>
            <person name="Whitehead S."/>
            <person name="Quail M.A."/>
            <person name="Dougan G."/>
            <person name="Parkhill J."/>
            <person name="Prentice M.B."/>
        </authorList>
    </citation>
    <scope>NUCLEOTIDE SEQUENCE [LARGE SCALE GENOMIC DNA]</scope>
    <source>
        <strain>NCTC 13174 / 8081</strain>
    </source>
</reference>
<accession>A1JML2</accession>
<protein>
    <recommendedName>
        <fullName evidence="1">Phenylalanine--tRNA ligase alpha subunit</fullName>
        <ecNumber evidence="1">6.1.1.20</ecNumber>
    </recommendedName>
    <alternativeName>
        <fullName evidence="1">Phenylalanyl-tRNA synthetase alpha subunit</fullName>
        <shortName evidence="1">PheRS</shortName>
    </alternativeName>
</protein>